<feature type="chain" id="PRO_0000154474" description="Anthranilate phosphoribosyltransferase">
    <location>
        <begin position="1"/>
        <end position="336"/>
    </location>
</feature>
<feature type="binding site" evidence="1">
    <location>
        <position position="81"/>
    </location>
    <ligand>
        <name>5-phospho-alpha-D-ribose 1-diphosphate</name>
        <dbReference type="ChEBI" id="CHEBI:58017"/>
    </ligand>
</feature>
<feature type="binding site" evidence="1">
    <location>
        <position position="81"/>
    </location>
    <ligand>
        <name>anthranilate</name>
        <dbReference type="ChEBI" id="CHEBI:16567"/>
        <label>1</label>
    </ligand>
</feature>
<feature type="binding site" evidence="1">
    <location>
        <begin position="84"/>
        <end position="85"/>
    </location>
    <ligand>
        <name>5-phospho-alpha-D-ribose 1-diphosphate</name>
        <dbReference type="ChEBI" id="CHEBI:58017"/>
    </ligand>
</feature>
<feature type="binding site" evidence="1">
    <location>
        <position position="89"/>
    </location>
    <ligand>
        <name>5-phospho-alpha-D-ribose 1-diphosphate</name>
        <dbReference type="ChEBI" id="CHEBI:58017"/>
    </ligand>
</feature>
<feature type="binding site" evidence="1">
    <location>
        <begin position="91"/>
        <end position="94"/>
    </location>
    <ligand>
        <name>5-phospho-alpha-D-ribose 1-diphosphate</name>
        <dbReference type="ChEBI" id="CHEBI:58017"/>
    </ligand>
</feature>
<feature type="binding site" evidence="1">
    <location>
        <position position="93"/>
    </location>
    <ligand>
        <name>Mg(2+)</name>
        <dbReference type="ChEBI" id="CHEBI:18420"/>
        <label>1</label>
    </ligand>
</feature>
<feature type="binding site" evidence="1">
    <location>
        <begin position="109"/>
        <end position="117"/>
    </location>
    <ligand>
        <name>5-phospho-alpha-D-ribose 1-diphosphate</name>
        <dbReference type="ChEBI" id="CHEBI:58017"/>
    </ligand>
</feature>
<feature type="binding site" evidence="1">
    <location>
        <position position="112"/>
    </location>
    <ligand>
        <name>anthranilate</name>
        <dbReference type="ChEBI" id="CHEBI:16567"/>
        <label>1</label>
    </ligand>
</feature>
<feature type="binding site" evidence="1">
    <location>
        <position position="121"/>
    </location>
    <ligand>
        <name>5-phospho-alpha-D-ribose 1-diphosphate</name>
        <dbReference type="ChEBI" id="CHEBI:58017"/>
    </ligand>
</feature>
<feature type="binding site" evidence="1">
    <location>
        <position position="167"/>
    </location>
    <ligand>
        <name>anthranilate</name>
        <dbReference type="ChEBI" id="CHEBI:16567"/>
        <label>2</label>
    </ligand>
</feature>
<feature type="binding site" evidence="1">
    <location>
        <position position="225"/>
    </location>
    <ligand>
        <name>Mg(2+)</name>
        <dbReference type="ChEBI" id="CHEBI:18420"/>
        <label>2</label>
    </ligand>
</feature>
<feature type="binding site" evidence="1">
    <location>
        <position position="226"/>
    </location>
    <ligand>
        <name>Mg(2+)</name>
        <dbReference type="ChEBI" id="CHEBI:18420"/>
        <label>1</label>
    </ligand>
</feature>
<feature type="binding site" evidence="1">
    <location>
        <position position="226"/>
    </location>
    <ligand>
        <name>Mg(2+)</name>
        <dbReference type="ChEBI" id="CHEBI:18420"/>
        <label>2</label>
    </ligand>
</feature>
<comment type="function">
    <text evidence="1">Catalyzes the transfer of the phosphoribosyl group of 5-phosphorylribose-1-pyrophosphate (PRPP) to anthranilate to yield N-(5'-phosphoribosyl)-anthranilate (PRA).</text>
</comment>
<comment type="catalytic activity">
    <reaction evidence="1">
        <text>N-(5-phospho-beta-D-ribosyl)anthranilate + diphosphate = 5-phospho-alpha-D-ribose 1-diphosphate + anthranilate</text>
        <dbReference type="Rhea" id="RHEA:11768"/>
        <dbReference type="ChEBI" id="CHEBI:16567"/>
        <dbReference type="ChEBI" id="CHEBI:18277"/>
        <dbReference type="ChEBI" id="CHEBI:33019"/>
        <dbReference type="ChEBI" id="CHEBI:58017"/>
        <dbReference type="EC" id="2.4.2.18"/>
    </reaction>
</comment>
<comment type="cofactor">
    <cofactor evidence="1">
        <name>Mg(2+)</name>
        <dbReference type="ChEBI" id="CHEBI:18420"/>
    </cofactor>
    <text evidence="1">Binds 2 magnesium ions per monomer.</text>
</comment>
<comment type="pathway">
    <text evidence="1">Amino-acid biosynthesis; L-tryptophan biosynthesis; L-tryptophan from chorismate: step 2/5.</text>
</comment>
<comment type="subunit">
    <text evidence="1">Homodimer.</text>
</comment>
<comment type="similarity">
    <text evidence="1">Belongs to the anthranilate phosphoribosyltransferase family.</text>
</comment>
<dbReference type="EC" id="2.4.2.18" evidence="1"/>
<dbReference type="EMBL" id="BA000012">
    <property type="protein sequence ID" value="BAB48169.1"/>
    <property type="molecule type" value="Genomic_DNA"/>
</dbReference>
<dbReference type="RefSeq" id="WP_010909524.1">
    <property type="nucleotide sequence ID" value="NC_002678.2"/>
</dbReference>
<dbReference type="SMR" id="Q98ME4"/>
<dbReference type="KEGG" id="mlo:mlr0614"/>
<dbReference type="PATRIC" id="fig|266835.9.peg.491"/>
<dbReference type="eggNOG" id="COG0547">
    <property type="taxonomic scope" value="Bacteria"/>
</dbReference>
<dbReference type="HOGENOM" id="CLU_034315_2_1_5"/>
<dbReference type="UniPathway" id="UPA00035">
    <property type="reaction ID" value="UER00041"/>
</dbReference>
<dbReference type="Proteomes" id="UP000000552">
    <property type="component" value="Chromosome"/>
</dbReference>
<dbReference type="GO" id="GO:0005829">
    <property type="term" value="C:cytosol"/>
    <property type="evidence" value="ECO:0007669"/>
    <property type="project" value="TreeGrafter"/>
</dbReference>
<dbReference type="GO" id="GO:0004048">
    <property type="term" value="F:anthranilate phosphoribosyltransferase activity"/>
    <property type="evidence" value="ECO:0007669"/>
    <property type="project" value="UniProtKB-UniRule"/>
</dbReference>
<dbReference type="GO" id="GO:0000287">
    <property type="term" value="F:magnesium ion binding"/>
    <property type="evidence" value="ECO:0007669"/>
    <property type="project" value="UniProtKB-UniRule"/>
</dbReference>
<dbReference type="GO" id="GO:0000162">
    <property type="term" value="P:L-tryptophan biosynthetic process"/>
    <property type="evidence" value="ECO:0007669"/>
    <property type="project" value="UniProtKB-UniRule"/>
</dbReference>
<dbReference type="FunFam" id="3.40.1030.10:FF:000002">
    <property type="entry name" value="Anthranilate phosphoribosyltransferase"/>
    <property type="match status" value="1"/>
</dbReference>
<dbReference type="Gene3D" id="3.40.1030.10">
    <property type="entry name" value="Nucleoside phosphorylase/phosphoribosyltransferase catalytic domain"/>
    <property type="match status" value="1"/>
</dbReference>
<dbReference type="Gene3D" id="1.20.970.10">
    <property type="entry name" value="Transferase, Pyrimidine Nucleoside Phosphorylase, Chain C"/>
    <property type="match status" value="1"/>
</dbReference>
<dbReference type="HAMAP" id="MF_00211">
    <property type="entry name" value="TrpD"/>
    <property type="match status" value="1"/>
</dbReference>
<dbReference type="InterPro" id="IPR005940">
    <property type="entry name" value="Anthranilate_Pribosyl_Tfrase"/>
</dbReference>
<dbReference type="InterPro" id="IPR000312">
    <property type="entry name" value="Glycosyl_Trfase_fam3"/>
</dbReference>
<dbReference type="InterPro" id="IPR017459">
    <property type="entry name" value="Glycosyl_Trfase_fam3_N_dom"/>
</dbReference>
<dbReference type="InterPro" id="IPR036320">
    <property type="entry name" value="Glycosyl_Trfase_fam3_N_dom_sf"/>
</dbReference>
<dbReference type="InterPro" id="IPR035902">
    <property type="entry name" value="Nuc_phospho_transferase"/>
</dbReference>
<dbReference type="NCBIfam" id="TIGR01245">
    <property type="entry name" value="trpD"/>
    <property type="match status" value="1"/>
</dbReference>
<dbReference type="PANTHER" id="PTHR43285">
    <property type="entry name" value="ANTHRANILATE PHOSPHORIBOSYLTRANSFERASE"/>
    <property type="match status" value="1"/>
</dbReference>
<dbReference type="PANTHER" id="PTHR43285:SF2">
    <property type="entry name" value="ANTHRANILATE PHOSPHORIBOSYLTRANSFERASE"/>
    <property type="match status" value="1"/>
</dbReference>
<dbReference type="Pfam" id="PF02885">
    <property type="entry name" value="Glycos_trans_3N"/>
    <property type="match status" value="1"/>
</dbReference>
<dbReference type="Pfam" id="PF00591">
    <property type="entry name" value="Glycos_transf_3"/>
    <property type="match status" value="1"/>
</dbReference>
<dbReference type="SUPFAM" id="SSF52418">
    <property type="entry name" value="Nucleoside phosphorylase/phosphoribosyltransferase catalytic domain"/>
    <property type="match status" value="1"/>
</dbReference>
<dbReference type="SUPFAM" id="SSF47648">
    <property type="entry name" value="Nucleoside phosphorylase/phosphoribosyltransferase N-terminal domain"/>
    <property type="match status" value="1"/>
</dbReference>
<organism>
    <name type="scientific">Mesorhizobium japonicum (strain LMG 29417 / CECT 9101 / MAFF 303099)</name>
    <name type="common">Mesorhizobium loti (strain MAFF 303099)</name>
    <dbReference type="NCBI Taxonomy" id="266835"/>
    <lineage>
        <taxon>Bacteria</taxon>
        <taxon>Pseudomonadati</taxon>
        <taxon>Pseudomonadota</taxon>
        <taxon>Alphaproteobacteria</taxon>
        <taxon>Hyphomicrobiales</taxon>
        <taxon>Phyllobacteriaceae</taxon>
        <taxon>Mesorhizobium</taxon>
    </lineage>
</organism>
<keyword id="KW-0028">Amino-acid biosynthesis</keyword>
<keyword id="KW-0057">Aromatic amino acid biosynthesis</keyword>
<keyword id="KW-0328">Glycosyltransferase</keyword>
<keyword id="KW-0460">Magnesium</keyword>
<keyword id="KW-0479">Metal-binding</keyword>
<keyword id="KW-0808">Transferase</keyword>
<keyword id="KW-0822">Tryptophan biosynthesis</keyword>
<gene>
    <name evidence="1" type="primary">trpD</name>
    <name type="ordered locus">mlr0614</name>
</gene>
<accession>Q98ME4</accession>
<protein>
    <recommendedName>
        <fullName evidence="1">Anthranilate phosphoribosyltransferase</fullName>
        <ecNumber evidence="1">2.4.2.18</ecNumber>
    </recommendedName>
</protein>
<reference key="1">
    <citation type="journal article" date="2000" name="DNA Res.">
        <title>Complete genome structure of the nitrogen-fixing symbiotic bacterium Mesorhizobium loti.</title>
        <authorList>
            <person name="Kaneko T."/>
            <person name="Nakamura Y."/>
            <person name="Sato S."/>
            <person name="Asamizu E."/>
            <person name="Kato T."/>
            <person name="Sasamoto S."/>
            <person name="Watanabe A."/>
            <person name="Idesawa K."/>
            <person name="Ishikawa A."/>
            <person name="Kawashima K."/>
            <person name="Kimura T."/>
            <person name="Kishida Y."/>
            <person name="Kiyokawa C."/>
            <person name="Kohara M."/>
            <person name="Matsumoto M."/>
            <person name="Matsuno A."/>
            <person name="Mochizuki Y."/>
            <person name="Nakayama S."/>
            <person name="Nakazaki N."/>
            <person name="Shimpo S."/>
            <person name="Sugimoto M."/>
            <person name="Takeuchi C."/>
            <person name="Yamada M."/>
            <person name="Tabata S."/>
        </authorList>
    </citation>
    <scope>NUCLEOTIDE SEQUENCE [LARGE SCALE GENOMIC DNA]</scope>
    <source>
        <strain>LMG 29417 / CECT 9101 / MAFF 303099</strain>
    </source>
</reference>
<name>TRPD_RHILO</name>
<evidence type="ECO:0000255" key="1">
    <source>
        <dbReference type="HAMAP-Rule" id="MF_00211"/>
    </source>
</evidence>
<proteinExistence type="inferred from homology"/>
<sequence length="336" mass="34609">MSALKTHIAKVAAGTALSFEEAREAFDIIMSGDATPGQIGGFLMALRVRGETVSEISGAVATMRAKMLRVEAPAGAIDIVGTGGDNSHSVNISTGSAFVIAAAGVPVAKHGNRGLSSLTGAADVLIALGVKIDIPPDAIGRCIHEAGVGFMFAPAHHPAMKHVGPTRVELGTRTIFNLLGPLSNPAGVVRQMVGVFLPEWILPVAETLKALGTEHAWVVHGDGYDEITTTGETQVAELIGGEIRSFTLTPEEVGLKRHTKDELRGGDAAYNANALRDMLDGAAGAYRDTVLMNAGAGLVIAGKATTLGDGIALAAQAIDSGRALQVLDRLVEISNG</sequence>